<dbReference type="EMBL" id="CP000423">
    <property type="protein sequence ID" value="ABJ69950.1"/>
    <property type="molecule type" value="Genomic_DNA"/>
</dbReference>
<dbReference type="RefSeq" id="WP_011674409.1">
    <property type="nucleotide sequence ID" value="NC_008526.1"/>
</dbReference>
<dbReference type="RefSeq" id="YP_806392.1">
    <property type="nucleotide sequence ID" value="NC_008526.1"/>
</dbReference>
<dbReference type="SMR" id="Q03A22"/>
<dbReference type="STRING" id="321967.LSEI_1162"/>
<dbReference type="PaxDb" id="321967-LSEI_1162"/>
<dbReference type="KEGG" id="lca:LSEI_1162"/>
<dbReference type="PATRIC" id="fig|321967.11.peg.1135"/>
<dbReference type="HOGENOM" id="CLU_079215_4_2_9"/>
<dbReference type="Proteomes" id="UP000001651">
    <property type="component" value="Chromosome"/>
</dbReference>
<dbReference type="GO" id="GO:0005886">
    <property type="term" value="C:plasma membrane"/>
    <property type="evidence" value="ECO:0007669"/>
    <property type="project" value="UniProtKB-SubCell"/>
</dbReference>
<dbReference type="GO" id="GO:0045259">
    <property type="term" value="C:proton-transporting ATP synthase complex"/>
    <property type="evidence" value="ECO:0007669"/>
    <property type="project" value="UniProtKB-KW"/>
</dbReference>
<dbReference type="GO" id="GO:0046933">
    <property type="term" value="F:proton-transporting ATP synthase activity, rotational mechanism"/>
    <property type="evidence" value="ECO:0007669"/>
    <property type="project" value="UniProtKB-UniRule"/>
</dbReference>
<dbReference type="GO" id="GO:0046961">
    <property type="term" value="F:proton-transporting ATPase activity, rotational mechanism"/>
    <property type="evidence" value="ECO:0007669"/>
    <property type="project" value="TreeGrafter"/>
</dbReference>
<dbReference type="CDD" id="cd06503">
    <property type="entry name" value="ATP-synt_Fo_b"/>
    <property type="match status" value="1"/>
</dbReference>
<dbReference type="Gene3D" id="6.10.250.1580">
    <property type="match status" value="1"/>
</dbReference>
<dbReference type="HAMAP" id="MF_01398">
    <property type="entry name" value="ATP_synth_b_bprime"/>
    <property type="match status" value="1"/>
</dbReference>
<dbReference type="InterPro" id="IPR028987">
    <property type="entry name" value="ATP_synth_B-like_membr_sf"/>
</dbReference>
<dbReference type="InterPro" id="IPR002146">
    <property type="entry name" value="ATP_synth_b/b'su_bac/chlpt"/>
</dbReference>
<dbReference type="InterPro" id="IPR005864">
    <property type="entry name" value="ATP_synth_F0_bsu_bac"/>
</dbReference>
<dbReference type="InterPro" id="IPR050059">
    <property type="entry name" value="ATP_synthase_B_chain"/>
</dbReference>
<dbReference type="NCBIfam" id="TIGR01144">
    <property type="entry name" value="ATP_synt_b"/>
    <property type="match status" value="1"/>
</dbReference>
<dbReference type="PANTHER" id="PTHR33445:SF1">
    <property type="entry name" value="ATP SYNTHASE SUBUNIT B"/>
    <property type="match status" value="1"/>
</dbReference>
<dbReference type="PANTHER" id="PTHR33445">
    <property type="entry name" value="ATP SYNTHASE SUBUNIT B', CHLOROPLASTIC"/>
    <property type="match status" value="1"/>
</dbReference>
<dbReference type="Pfam" id="PF00430">
    <property type="entry name" value="ATP-synt_B"/>
    <property type="match status" value="1"/>
</dbReference>
<dbReference type="SUPFAM" id="SSF81573">
    <property type="entry name" value="F1F0 ATP synthase subunit B, membrane domain"/>
    <property type="match status" value="1"/>
</dbReference>
<keyword id="KW-0066">ATP synthesis</keyword>
<keyword id="KW-1003">Cell membrane</keyword>
<keyword id="KW-0138">CF(0)</keyword>
<keyword id="KW-0375">Hydrogen ion transport</keyword>
<keyword id="KW-0406">Ion transport</keyword>
<keyword id="KW-0472">Membrane</keyword>
<keyword id="KW-1185">Reference proteome</keyword>
<keyword id="KW-0812">Transmembrane</keyword>
<keyword id="KW-1133">Transmembrane helix</keyword>
<keyword id="KW-0813">Transport</keyword>
<gene>
    <name evidence="1" type="primary">atpF</name>
    <name type="ordered locus">LSEI_1162</name>
</gene>
<evidence type="ECO:0000255" key="1">
    <source>
        <dbReference type="HAMAP-Rule" id="MF_01398"/>
    </source>
</evidence>
<feature type="chain" id="PRO_0000368539" description="ATP synthase subunit b">
    <location>
        <begin position="1"/>
        <end position="162"/>
    </location>
</feature>
<feature type="transmembrane region" description="Helical" evidence="1">
    <location>
        <begin position="6"/>
        <end position="25"/>
    </location>
</feature>
<accession>Q03A22</accession>
<name>ATPF_LACP3</name>
<comment type="function">
    <text evidence="1">F(1)F(0) ATP synthase produces ATP from ADP in the presence of a proton or sodium gradient. F-type ATPases consist of two structural domains, F(1) containing the extramembraneous catalytic core and F(0) containing the membrane proton channel, linked together by a central stalk and a peripheral stalk. During catalysis, ATP synthesis in the catalytic domain of F(1) is coupled via a rotary mechanism of the central stalk subunits to proton translocation.</text>
</comment>
<comment type="function">
    <text evidence="1">Component of the F(0) channel, it forms part of the peripheral stalk, linking F(1) to F(0).</text>
</comment>
<comment type="subunit">
    <text evidence="1">F-type ATPases have 2 components, F(1) - the catalytic core - and F(0) - the membrane proton channel. F(1) has five subunits: alpha(3), beta(3), gamma(1), delta(1), epsilon(1). F(0) has three main subunits: a(1), b(2) and c(10-14). The alpha and beta chains form an alternating ring which encloses part of the gamma chain. F(1) is attached to F(0) by a central stalk formed by the gamma and epsilon chains, while a peripheral stalk is formed by the delta and b chains.</text>
</comment>
<comment type="subcellular location">
    <subcellularLocation>
        <location evidence="1">Cell membrane</location>
        <topology evidence="1">Single-pass membrane protein</topology>
    </subcellularLocation>
</comment>
<comment type="similarity">
    <text evidence="1">Belongs to the ATPase B chain family.</text>
</comment>
<organism>
    <name type="scientific">Lacticaseibacillus paracasei (strain ATCC 334 / BCRC 17002 / CCUG 31169 / CIP 107868 / KCTC 3260 / NRRL B-441)</name>
    <name type="common">Lactobacillus paracasei</name>
    <dbReference type="NCBI Taxonomy" id="321967"/>
    <lineage>
        <taxon>Bacteria</taxon>
        <taxon>Bacillati</taxon>
        <taxon>Bacillota</taxon>
        <taxon>Bacilli</taxon>
        <taxon>Lactobacillales</taxon>
        <taxon>Lactobacillaceae</taxon>
        <taxon>Lacticaseibacillus</taxon>
    </lineage>
</organism>
<sequence length="162" mass="17739">MTLGDTLFTLVTFLVLMLAVGKVAWKPVSKMMADRQQKISGDLDYAEKSRKDADALVAKRQEELQHSQADAVKIVNQAKENGEKLRQSLVDAANAEVTTMKKNAQTEIDQARKDALASAKNDVADLSLTIAQKLIGKELNADDQKGLIDDYIKRLGDANGSH</sequence>
<protein>
    <recommendedName>
        <fullName evidence="1">ATP synthase subunit b</fullName>
    </recommendedName>
    <alternativeName>
        <fullName evidence="1">ATP synthase F(0) sector subunit b</fullName>
    </alternativeName>
    <alternativeName>
        <fullName evidence="1">ATPase subunit I</fullName>
    </alternativeName>
    <alternativeName>
        <fullName evidence="1">F-type ATPase subunit b</fullName>
        <shortName evidence="1">F-ATPase subunit b</shortName>
    </alternativeName>
</protein>
<reference key="1">
    <citation type="journal article" date="2006" name="Proc. Natl. Acad. Sci. U.S.A.">
        <title>Comparative genomics of the lactic acid bacteria.</title>
        <authorList>
            <person name="Makarova K.S."/>
            <person name="Slesarev A."/>
            <person name="Wolf Y.I."/>
            <person name="Sorokin A."/>
            <person name="Mirkin B."/>
            <person name="Koonin E.V."/>
            <person name="Pavlov A."/>
            <person name="Pavlova N."/>
            <person name="Karamychev V."/>
            <person name="Polouchine N."/>
            <person name="Shakhova V."/>
            <person name="Grigoriev I."/>
            <person name="Lou Y."/>
            <person name="Rohksar D."/>
            <person name="Lucas S."/>
            <person name="Huang K."/>
            <person name="Goodstein D.M."/>
            <person name="Hawkins T."/>
            <person name="Plengvidhya V."/>
            <person name="Welker D."/>
            <person name="Hughes J."/>
            <person name="Goh Y."/>
            <person name="Benson A."/>
            <person name="Baldwin K."/>
            <person name="Lee J.-H."/>
            <person name="Diaz-Muniz I."/>
            <person name="Dosti B."/>
            <person name="Smeianov V."/>
            <person name="Wechter W."/>
            <person name="Barabote R."/>
            <person name="Lorca G."/>
            <person name="Altermann E."/>
            <person name="Barrangou R."/>
            <person name="Ganesan B."/>
            <person name="Xie Y."/>
            <person name="Rawsthorne H."/>
            <person name="Tamir D."/>
            <person name="Parker C."/>
            <person name="Breidt F."/>
            <person name="Broadbent J.R."/>
            <person name="Hutkins R."/>
            <person name="O'Sullivan D."/>
            <person name="Steele J."/>
            <person name="Unlu G."/>
            <person name="Saier M.H. Jr."/>
            <person name="Klaenhammer T."/>
            <person name="Richardson P."/>
            <person name="Kozyavkin S."/>
            <person name="Weimer B.C."/>
            <person name="Mills D.A."/>
        </authorList>
    </citation>
    <scope>NUCLEOTIDE SEQUENCE [LARGE SCALE GENOMIC DNA]</scope>
    <source>
        <strain>ATCC 334 / BCRC 17002 / CCUG 31169 / CIP 107868 / KCTC 3260 / NRRL B-441</strain>
    </source>
</reference>
<proteinExistence type="inferred from homology"/>